<feature type="chain" id="PRO_0000153672" description="Prefoldin subunit alpha">
    <location>
        <begin position="1"/>
        <end position="154"/>
    </location>
</feature>
<feature type="region of interest" description="Disordered" evidence="2">
    <location>
        <begin position="123"/>
        <end position="154"/>
    </location>
</feature>
<feature type="compositionally biased region" description="Low complexity" evidence="2">
    <location>
        <begin position="127"/>
        <end position="154"/>
    </location>
</feature>
<gene>
    <name type="primary">pfdA</name>
    <name type="ordered locus">VNG_2465C</name>
</gene>
<proteinExistence type="inferred from homology"/>
<dbReference type="EMBL" id="AE004437">
    <property type="protein sequence ID" value="AAG20539.1"/>
    <property type="molecule type" value="Genomic_DNA"/>
</dbReference>
<dbReference type="PIR" id="G84396">
    <property type="entry name" value="G84396"/>
</dbReference>
<dbReference type="RefSeq" id="WP_010903841.1">
    <property type="nucleotide sequence ID" value="NC_002607.1"/>
</dbReference>
<dbReference type="SMR" id="Q9HMN2"/>
<dbReference type="STRING" id="64091.VNG_2465C"/>
<dbReference type="PaxDb" id="64091-VNG_2465C"/>
<dbReference type="GeneID" id="68694976"/>
<dbReference type="KEGG" id="hal:VNG_2465C"/>
<dbReference type="PATRIC" id="fig|64091.14.peg.1907"/>
<dbReference type="HOGENOM" id="CLU_091867_1_3_2"/>
<dbReference type="InParanoid" id="Q9HMN2"/>
<dbReference type="OrthoDB" id="10045at2157"/>
<dbReference type="Proteomes" id="UP000000554">
    <property type="component" value="Chromosome"/>
</dbReference>
<dbReference type="GO" id="GO:0005737">
    <property type="term" value="C:cytoplasm"/>
    <property type="evidence" value="ECO:0000318"/>
    <property type="project" value="GO_Central"/>
</dbReference>
<dbReference type="GO" id="GO:0016272">
    <property type="term" value="C:prefoldin complex"/>
    <property type="evidence" value="ECO:0000318"/>
    <property type="project" value="GO_Central"/>
</dbReference>
<dbReference type="GO" id="GO:0051082">
    <property type="term" value="F:unfolded protein binding"/>
    <property type="evidence" value="ECO:0007669"/>
    <property type="project" value="UniProtKB-UniRule"/>
</dbReference>
<dbReference type="GO" id="GO:0006457">
    <property type="term" value="P:protein folding"/>
    <property type="evidence" value="ECO:0007669"/>
    <property type="project" value="UniProtKB-UniRule"/>
</dbReference>
<dbReference type="CDD" id="cd00584">
    <property type="entry name" value="Prefoldin_alpha"/>
    <property type="match status" value="1"/>
</dbReference>
<dbReference type="Gene3D" id="1.10.287.370">
    <property type="match status" value="1"/>
</dbReference>
<dbReference type="HAMAP" id="MF_00308">
    <property type="entry name" value="PfdA"/>
    <property type="match status" value="1"/>
</dbReference>
<dbReference type="InterPro" id="IPR011599">
    <property type="entry name" value="PFD_alpha_archaea"/>
</dbReference>
<dbReference type="InterPro" id="IPR009053">
    <property type="entry name" value="Prefoldin"/>
</dbReference>
<dbReference type="InterPro" id="IPR004127">
    <property type="entry name" value="Prefoldin_subunit_alpha"/>
</dbReference>
<dbReference type="NCBIfam" id="TIGR00293">
    <property type="entry name" value="prefoldin subunit alpha"/>
    <property type="match status" value="1"/>
</dbReference>
<dbReference type="PANTHER" id="PTHR12674">
    <property type="entry name" value="PREFOLDIN SUBUNIT 5"/>
    <property type="match status" value="1"/>
</dbReference>
<dbReference type="PANTHER" id="PTHR12674:SF2">
    <property type="entry name" value="PREFOLDIN SUBUNIT 5"/>
    <property type="match status" value="1"/>
</dbReference>
<dbReference type="Pfam" id="PF02996">
    <property type="entry name" value="Prefoldin"/>
    <property type="match status" value="1"/>
</dbReference>
<dbReference type="SUPFAM" id="SSF46579">
    <property type="entry name" value="Prefoldin"/>
    <property type="match status" value="1"/>
</dbReference>
<reference key="1">
    <citation type="journal article" date="2000" name="Proc. Natl. Acad. Sci. U.S.A.">
        <title>Genome sequence of Halobacterium species NRC-1.</title>
        <authorList>
            <person name="Ng W.V."/>
            <person name="Kennedy S.P."/>
            <person name="Mahairas G.G."/>
            <person name="Berquist B."/>
            <person name="Pan M."/>
            <person name="Shukla H.D."/>
            <person name="Lasky S.R."/>
            <person name="Baliga N.S."/>
            <person name="Thorsson V."/>
            <person name="Sbrogna J."/>
            <person name="Swartzell S."/>
            <person name="Weir D."/>
            <person name="Hall J."/>
            <person name="Dahl T.A."/>
            <person name="Welti R."/>
            <person name="Goo Y.A."/>
            <person name="Leithauser B."/>
            <person name="Keller K."/>
            <person name="Cruz R."/>
            <person name="Danson M.J."/>
            <person name="Hough D.W."/>
            <person name="Maddocks D.G."/>
            <person name="Jablonski P.E."/>
            <person name="Krebs M.P."/>
            <person name="Angevine C.M."/>
            <person name="Dale H."/>
            <person name="Isenbarger T.A."/>
            <person name="Peck R.F."/>
            <person name="Pohlschroder M."/>
            <person name="Spudich J.L."/>
            <person name="Jung K.-H."/>
            <person name="Alam M."/>
            <person name="Freitas T."/>
            <person name="Hou S."/>
            <person name="Daniels C.J."/>
            <person name="Dennis P.P."/>
            <person name="Omer A.D."/>
            <person name="Ebhardt H."/>
            <person name="Lowe T.M."/>
            <person name="Liang P."/>
            <person name="Riley M."/>
            <person name="Hood L."/>
            <person name="DasSarma S."/>
        </authorList>
    </citation>
    <scope>NUCLEOTIDE SEQUENCE [LARGE SCALE GENOMIC DNA]</scope>
    <source>
        <strain>ATCC 700922 / JCM 11081 / NRC-1</strain>
    </source>
</reference>
<organism>
    <name type="scientific">Halobacterium salinarum (strain ATCC 700922 / JCM 11081 / NRC-1)</name>
    <name type="common">Halobacterium halobium</name>
    <dbReference type="NCBI Taxonomy" id="64091"/>
    <lineage>
        <taxon>Archaea</taxon>
        <taxon>Methanobacteriati</taxon>
        <taxon>Methanobacteriota</taxon>
        <taxon>Stenosarchaea group</taxon>
        <taxon>Halobacteria</taxon>
        <taxon>Halobacteriales</taxon>
        <taxon>Halobacteriaceae</taxon>
        <taxon>Halobacterium</taxon>
        <taxon>Halobacterium salinarum NRC-34001</taxon>
    </lineage>
</organism>
<comment type="function">
    <text evidence="1">Molecular chaperone capable of stabilizing a range of proteins. Seems to fulfill an ATP-independent, HSP70-like function in archaeal de novo protein folding (By similarity).</text>
</comment>
<comment type="subunit">
    <text evidence="1">Heterohexamer of two alpha and four beta subunits.</text>
</comment>
<comment type="subcellular location">
    <subcellularLocation>
        <location evidence="1">Cytoplasm</location>
    </subcellularLocation>
</comment>
<comment type="similarity">
    <text evidence="3">Belongs to the prefoldin subunit alpha family.</text>
</comment>
<name>PFDA_HALSA</name>
<keyword id="KW-0143">Chaperone</keyword>
<keyword id="KW-0963">Cytoplasm</keyword>
<keyword id="KW-1185">Reference proteome</keyword>
<sequence length="154" mass="16704">MSLGGGGQQQLQQLSQEIQAIEEEVEELEADVASLRQEQTEIEEAKEALDVLETGATVQVPLGGDAYVRAEVKDMDEVVVSLGGGYAAEQDSDAAASVLDEKKATIDGRIDDVQAEIADLSEEAEQLEQQAQQAQQQMMQQQMQAQQQPQDGEQ</sequence>
<evidence type="ECO:0000250" key="1"/>
<evidence type="ECO:0000256" key="2">
    <source>
        <dbReference type="SAM" id="MobiDB-lite"/>
    </source>
</evidence>
<evidence type="ECO:0000305" key="3"/>
<accession>Q9HMN2</accession>
<protein>
    <recommendedName>
        <fullName>Prefoldin subunit alpha</fullName>
    </recommendedName>
    <alternativeName>
        <fullName>GimC subunit alpha</fullName>
    </alternativeName>
</protein>